<name>SPC25_KLULA</name>
<dbReference type="EMBL" id="CR382123">
    <property type="protein sequence ID" value="CAH01140.1"/>
    <property type="molecule type" value="Genomic_DNA"/>
</dbReference>
<dbReference type="RefSeq" id="XP_452289.1">
    <property type="nucleotide sequence ID" value="XM_452289.1"/>
</dbReference>
<dbReference type="SMR" id="Q6CUV0"/>
<dbReference type="STRING" id="284590.Q6CUV0"/>
<dbReference type="PaxDb" id="284590-Q6CUV0"/>
<dbReference type="KEGG" id="kla:KLLA0_C02079g"/>
<dbReference type="eggNOG" id="KOG4657">
    <property type="taxonomic scope" value="Eukaryota"/>
</dbReference>
<dbReference type="HOGENOM" id="CLU_085127_1_0_1"/>
<dbReference type="InParanoid" id="Q6CUV0"/>
<dbReference type="OMA" id="FRMNLAD"/>
<dbReference type="Proteomes" id="UP000000598">
    <property type="component" value="Chromosome C"/>
</dbReference>
<dbReference type="GO" id="GO:0031262">
    <property type="term" value="C:Ndc80 complex"/>
    <property type="evidence" value="ECO:0000250"/>
    <property type="project" value="UniProtKB"/>
</dbReference>
<dbReference type="GO" id="GO:0005634">
    <property type="term" value="C:nucleus"/>
    <property type="evidence" value="ECO:0007669"/>
    <property type="project" value="UniProtKB-SubCell"/>
</dbReference>
<dbReference type="GO" id="GO:0051301">
    <property type="term" value="P:cell division"/>
    <property type="evidence" value="ECO:0007669"/>
    <property type="project" value="UniProtKB-KW"/>
</dbReference>
<dbReference type="GO" id="GO:0007059">
    <property type="term" value="P:chromosome segregation"/>
    <property type="evidence" value="ECO:0007669"/>
    <property type="project" value="InterPro"/>
</dbReference>
<dbReference type="CDD" id="cd23784">
    <property type="entry name" value="RWD_Spc25"/>
    <property type="match status" value="1"/>
</dbReference>
<dbReference type="Gene3D" id="3.30.457.50">
    <property type="entry name" value="Chromosome segregation protein Spc25"/>
    <property type="match status" value="1"/>
</dbReference>
<dbReference type="InterPro" id="IPR045143">
    <property type="entry name" value="Spc25"/>
</dbReference>
<dbReference type="InterPro" id="IPR013255">
    <property type="entry name" value="Spc25_C"/>
</dbReference>
<dbReference type="PANTHER" id="PTHR14281:SF0">
    <property type="entry name" value="KINETOCHORE PROTEIN SPC25"/>
    <property type="match status" value="1"/>
</dbReference>
<dbReference type="PANTHER" id="PTHR14281">
    <property type="entry name" value="KINETOCHORE PROTEIN SPC25-RELATED"/>
    <property type="match status" value="1"/>
</dbReference>
<dbReference type="Pfam" id="PF08234">
    <property type="entry name" value="Spindle_Spc25"/>
    <property type="match status" value="1"/>
</dbReference>
<sequence length="227" mass="26120">MGIDDFNELKLKMDDFQSKIHQFLIKNNQDLATKSETYWNSESEKIKKIEALKDKLRQLEEHQISLEEEFESSQREVSEVNAQSKAFLTKRDKLIGEREFLHKELDKLDILLKEQTKDLEREKQSRLLQSSKDTNEVALFETLLGLHISANAQDAITFHFTSRTVDVSPQLSITLDVSQDTYKITDSNPKLPQIIKNDLLNNLAATDDLRSFLKAARSHLSALTEAT</sequence>
<accession>Q6CUV0</accession>
<feature type="chain" id="PRO_0000246677" description="Probable kinetochore protein SPC25">
    <location>
        <begin position="1"/>
        <end position="227"/>
    </location>
</feature>
<feature type="coiled-coil region" evidence="3">
    <location>
        <begin position="40"/>
        <end position="125"/>
    </location>
</feature>
<comment type="function">
    <text evidence="1">Acts as a component of the essential kinetochore-associated NDC80 complex, which is required for chromosome segregation and spindle checkpoint activity.</text>
</comment>
<comment type="subunit">
    <text evidence="1">Component of the NDC80 complex, which consists of NDC80, NUF2, SPC24 and SPC25.</text>
</comment>
<comment type="subcellular location">
    <subcellularLocation>
        <location evidence="2">Nucleus</location>
    </subcellularLocation>
    <subcellularLocation>
        <location evidence="2">Chromosome</location>
        <location evidence="2">Centromere</location>
        <location evidence="2">Kinetochore</location>
    </subcellularLocation>
    <text evidence="2">Associated with kinetochores.</text>
</comment>
<comment type="similarity">
    <text evidence="4">Belongs to the SPC25 family.</text>
</comment>
<reference key="1">
    <citation type="journal article" date="2004" name="Nature">
        <title>Genome evolution in yeasts.</title>
        <authorList>
            <person name="Dujon B."/>
            <person name="Sherman D."/>
            <person name="Fischer G."/>
            <person name="Durrens P."/>
            <person name="Casaregola S."/>
            <person name="Lafontaine I."/>
            <person name="de Montigny J."/>
            <person name="Marck C."/>
            <person name="Neuveglise C."/>
            <person name="Talla E."/>
            <person name="Goffard N."/>
            <person name="Frangeul L."/>
            <person name="Aigle M."/>
            <person name="Anthouard V."/>
            <person name="Babour A."/>
            <person name="Barbe V."/>
            <person name="Barnay S."/>
            <person name="Blanchin S."/>
            <person name="Beckerich J.-M."/>
            <person name="Beyne E."/>
            <person name="Bleykasten C."/>
            <person name="Boisrame A."/>
            <person name="Boyer J."/>
            <person name="Cattolico L."/>
            <person name="Confanioleri F."/>
            <person name="de Daruvar A."/>
            <person name="Despons L."/>
            <person name="Fabre E."/>
            <person name="Fairhead C."/>
            <person name="Ferry-Dumazet H."/>
            <person name="Groppi A."/>
            <person name="Hantraye F."/>
            <person name="Hennequin C."/>
            <person name="Jauniaux N."/>
            <person name="Joyet P."/>
            <person name="Kachouri R."/>
            <person name="Kerrest A."/>
            <person name="Koszul R."/>
            <person name="Lemaire M."/>
            <person name="Lesur I."/>
            <person name="Ma L."/>
            <person name="Muller H."/>
            <person name="Nicaud J.-M."/>
            <person name="Nikolski M."/>
            <person name="Oztas S."/>
            <person name="Ozier-Kalogeropoulos O."/>
            <person name="Pellenz S."/>
            <person name="Potier S."/>
            <person name="Richard G.-F."/>
            <person name="Straub M.-L."/>
            <person name="Suleau A."/>
            <person name="Swennen D."/>
            <person name="Tekaia F."/>
            <person name="Wesolowski-Louvel M."/>
            <person name="Westhof E."/>
            <person name="Wirth B."/>
            <person name="Zeniou-Meyer M."/>
            <person name="Zivanovic Y."/>
            <person name="Bolotin-Fukuhara M."/>
            <person name="Thierry A."/>
            <person name="Bouchier C."/>
            <person name="Caudron B."/>
            <person name="Scarpelli C."/>
            <person name="Gaillardin C."/>
            <person name="Weissenbach J."/>
            <person name="Wincker P."/>
            <person name="Souciet J.-L."/>
        </authorList>
    </citation>
    <scope>NUCLEOTIDE SEQUENCE [LARGE SCALE GENOMIC DNA]</scope>
    <source>
        <strain>ATCC 8585 / CBS 2359 / DSM 70799 / NBRC 1267 / NRRL Y-1140 / WM37</strain>
    </source>
</reference>
<evidence type="ECO:0000250" key="1"/>
<evidence type="ECO:0000250" key="2">
    <source>
        <dbReference type="UniProtKB" id="P40014"/>
    </source>
</evidence>
<evidence type="ECO:0000255" key="3"/>
<evidence type="ECO:0000305" key="4"/>
<gene>
    <name type="primary">SPC25</name>
    <name type="ordered locus">KLLA0C02079g</name>
</gene>
<organism>
    <name type="scientific">Kluyveromyces lactis (strain ATCC 8585 / CBS 2359 / DSM 70799 / NBRC 1267 / NRRL Y-1140 / WM37)</name>
    <name type="common">Yeast</name>
    <name type="synonym">Candida sphaerica</name>
    <dbReference type="NCBI Taxonomy" id="284590"/>
    <lineage>
        <taxon>Eukaryota</taxon>
        <taxon>Fungi</taxon>
        <taxon>Dikarya</taxon>
        <taxon>Ascomycota</taxon>
        <taxon>Saccharomycotina</taxon>
        <taxon>Saccharomycetes</taxon>
        <taxon>Saccharomycetales</taxon>
        <taxon>Saccharomycetaceae</taxon>
        <taxon>Kluyveromyces</taxon>
    </lineage>
</organism>
<protein>
    <recommendedName>
        <fullName>Probable kinetochore protein SPC25</fullName>
    </recommendedName>
</protein>
<keyword id="KW-0131">Cell cycle</keyword>
<keyword id="KW-0132">Cell division</keyword>
<keyword id="KW-0137">Centromere</keyword>
<keyword id="KW-0158">Chromosome</keyword>
<keyword id="KW-0175">Coiled coil</keyword>
<keyword id="KW-0995">Kinetochore</keyword>
<keyword id="KW-0498">Mitosis</keyword>
<keyword id="KW-0539">Nucleus</keyword>
<keyword id="KW-1185">Reference proteome</keyword>
<proteinExistence type="inferred from homology"/>